<keyword id="KW-1003">Cell membrane</keyword>
<keyword id="KW-0472">Membrane</keyword>
<keyword id="KW-0520">NAD</keyword>
<keyword id="KW-0874">Quinone</keyword>
<keyword id="KW-1278">Translocase</keyword>
<keyword id="KW-0812">Transmembrane</keyword>
<keyword id="KW-1133">Transmembrane helix</keyword>
<dbReference type="EC" id="7.1.1.-"/>
<dbReference type="EMBL" id="CP000087">
    <property type="protein sequence ID" value="ABE04166.1"/>
    <property type="molecule type" value="Genomic_DNA"/>
</dbReference>
<dbReference type="RefSeq" id="WP_011476781.1">
    <property type="nucleotide sequence ID" value="NC_007940.1"/>
</dbReference>
<dbReference type="SMR" id="Q1RKE8"/>
<dbReference type="KEGG" id="rbe:RBE_0085"/>
<dbReference type="eggNOG" id="COG0839">
    <property type="taxonomic scope" value="Bacteria"/>
</dbReference>
<dbReference type="HOGENOM" id="CLU_085957_5_1_5"/>
<dbReference type="OrthoDB" id="9795409at2"/>
<dbReference type="Proteomes" id="UP000001951">
    <property type="component" value="Chromosome"/>
</dbReference>
<dbReference type="GO" id="GO:0005886">
    <property type="term" value="C:plasma membrane"/>
    <property type="evidence" value="ECO:0007669"/>
    <property type="project" value="UniProtKB-SubCell"/>
</dbReference>
<dbReference type="GO" id="GO:0008137">
    <property type="term" value="F:NADH dehydrogenase (ubiquinone) activity"/>
    <property type="evidence" value="ECO:0007669"/>
    <property type="project" value="InterPro"/>
</dbReference>
<dbReference type="GO" id="GO:0048038">
    <property type="term" value="F:quinone binding"/>
    <property type="evidence" value="ECO:0007669"/>
    <property type="project" value="UniProtKB-KW"/>
</dbReference>
<dbReference type="Gene3D" id="1.20.120.1200">
    <property type="entry name" value="NADH-ubiquinone/plastoquinone oxidoreductase chain 6, subunit NuoJ"/>
    <property type="match status" value="1"/>
</dbReference>
<dbReference type="InterPro" id="IPR001457">
    <property type="entry name" value="NADH_UbQ/plastoQ_OxRdtase_su6"/>
</dbReference>
<dbReference type="InterPro" id="IPR042106">
    <property type="entry name" value="Nuo/plastoQ_OxRdtase_6_NuoJ"/>
</dbReference>
<dbReference type="NCBIfam" id="NF005164">
    <property type="entry name" value="PRK06638.1-4"/>
    <property type="match status" value="1"/>
</dbReference>
<dbReference type="PANTHER" id="PTHR33269">
    <property type="entry name" value="NADH-UBIQUINONE OXIDOREDUCTASE CHAIN 6"/>
    <property type="match status" value="1"/>
</dbReference>
<dbReference type="PANTHER" id="PTHR33269:SF17">
    <property type="entry name" value="NADH-UBIQUINONE OXIDOREDUCTASE CHAIN 6"/>
    <property type="match status" value="1"/>
</dbReference>
<dbReference type="Pfam" id="PF00499">
    <property type="entry name" value="Oxidored_q3"/>
    <property type="match status" value="1"/>
</dbReference>
<protein>
    <recommendedName>
        <fullName>NADH-quinone oxidoreductase subunit J</fullName>
        <ecNumber>7.1.1.-</ecNumber>
    </recommendedName>
    <alternativeName>
        <fullName>NADH dehydrogenase I subunit J</fullName>
    </alternativeName>
    <alternativeName>
        <fullName>NDH-1 subunit J</fullName>
    </alternativeName>
</protein>
<accession>Q1RKE8</accession>
<comment type="function">
    <text evidence="1">NDH-1 shuttles electrons from NADH, via FMN and iron-sulfur (Fe-S) centers, to quinones in the respiratory chain. Couples the redox reaction to proton translocation (for every two electrons transferred, four hydrogen ions are translocated across the cytoplasmic membrane), and thus conserves the redox energy in a proton gradient (By similarity).</text>
</comment>
<comment type="catalytic activity">
    <reaction>
        <text>a quinone + NADH + 5 H(+)(in) = a quinol + NAD(+) + 4 H(+)(out)</text>
        <dbReference type="Rhea" id="RHEA:57888"/>
        <dbReference type="ChEBI" id="CHEBI:15378"/>
        <dbReference type="ChEBI" id="CHEBI:24646"/>
        <dbReference type="ChEBI" id="CHEBI:57540"/>
        <dbReference type="ChEBI" id="CHEBI:57945"/>
        <dbReference type="ChEBI" id="CHEBI:132124"/>
    </reaction>
</comment>
<comment type="subcellular location">
    <subcellularLocation>
        <location>Cell membrane</location>
        <topology>Multi-pass membrane protein</topology>
    </subcellularLocation>
</comment>
<comment type="similarity">
    <text evidence="3">Belongs to the complex I subunit 6 family.</text>
</comment>
<gene>
    <name type="primary">nuoJ</name>
    <name type="ordered locus">RBE_0085</name>
</gene>
<proteinExistence type="inferred from homology"/>
<reference key="1">
    <citation type="journal article" date="2006" name="PLoS Genet.">
        <title>Genome sequence of Rickettsia bellii illuminates the role of amoebae in gene exchanges between intracellular pathogens.</title>
        <authorList>
            <person name="Ogata H."/>
            <person name="La Scola B."/>
            <person name="Audic S."/>
            <person name="Renesto P."/>
            <person name="Blanc G."/>
            <person name="Robert C."/>
            <person name="Fournier P.-E."/>
            <person name="Claverie J.-M."/>
            <person name="Raoult D."/>
        </authorList>
    </citation>
    <scope>NUCLEOTIDE SEQUENCE [LARGE SCALE GENOMIC DNA]</scope>
    <source>
        <strain>RML369-C</strain>
    </source>
</reference>
<name>NUOJ_RICBR</name>
<evidence type="ECO:0000250" key="1"/>
<evidence type="ECO:0000255" key="2"/>
<evidence type="ECO:0000305" key="3"/>
<feature type="chain" id="PRO_0000287839" description="NADH-quinone oxidoreductase subunit J">
    <location>
        <begin position="1"/>
        <end position="205"/>
    </location>
</feature>
<feature type="transmembrane region" description="Helical" evidence="2">
    <location>
        <begin position="1"/>
        <end position="21"/>
    </location>
</feature>
<feature type="transmembrane region" description="Helical" evidence="2">
    <location>
        <begin position="26"/>
        <end position="46"/>
    </location>
</feature>
<feature type="transmembrane region" description="Helical" evidence="2">
    <location>
        <begin position="54"/>
        <end position="74"/>
    </location>
</feature>
<feature type="transmembrane region" description="Helical" evidence="2">
    <location>
        <begin position="89"/>
        <end position="109"/>
    </location>
</feature>
<feature type="transmembrane region" description="Helical" evidence="2">
    <location>
        <begin position="142"/>
        <end position="162"/>
    </location>
</feature>
<organism>
    <name type="scientific">Rickettsia bellii (strain RML369-C)</name>
    <dbReference type="NCBI Taxonomy" id="336407"/>
    <lineage>
        <taxon>Bacteria</taxon>
        <taxon>Pseudomonadati</taxon>
        <taxon>Pseudomonadota</taxon>
        <taxon>Alphaproteobacteria</taxon>
        <taxon>Rickettsiales</taxon>
        <taxon>Rickettsiaceae</taxon>
        <taxon>Rickettsieae</taxon>
        <taxon>Rickettsia</taxon>
        <taxon>belli group</taxon>
    </lineage>
</organism>
<sequence>MPIFFYLFTTLIIISSLCVVLSKNSVYSVLWLIFAFINGSGLMILLGAEFLAMMLIVIYVGAVAVLFLFVIMMLDMHFNKAIMQLKEKPILSIFVSLIMFADLVVIILLGTKNIHFSSDLSFAIASDVSNTKAIGKILYTDFMIPFQIAGLILFVAMIGCITLTLRKRDGVKRQNIAKQLSHNKENAVLMTKPLINKGIENIKYE</sequence>